<gene>
    <name evidence="1" type="primary">tpiA</name>
    <name type="ordered locus">PSPA7_5468</name>
</gene>
<organism>
    <name type="scientific">Pseudomonas paraeruginosa (strain DSM 24068 / PA7)</name>
    <name type="common">Pseudomonas aeruginosa (strain PA7)</name>
    <dbReference type="NCBI Taxonomy" id="381754"/>
    <lineage>
        <taxon>Bacteria</taxon>
        <taxon>Pseudomonadati</taxon>
        <taxon>Pseudomonadota</taxon>
        <taxon>Gammaproteobacteria</taxon>
        <taxon>Pseudomonadales</taxon>
        <taxon>Pseudomonadaceae</taxon>
        <taxon>Pseudomonas</taxon>
        <taxon>Pseudomonas paraeruginosa</taxon>
    </lineage>
</organism>
<evidence type="ECO:0000255" key="1">
    <source>
        <dbReference type="HAMAP-Rule" id="MF_00147"/>
    </source>
</evidence>
<dbReference type="EC" id="5.3.1.1" evidence="1"/>
<dbReference type="EMBL" id="CP000744">
    <property type="protein sequence ID" value="ABR83452.1"/>
    <property type="molecule type" value="Genomic_DNA"/>
</dbReference>
<dbReference type="RefSeq" id="WP_003148731.1">
    <property type="nucleotide sequence ID" value="NC_009656.1"/>
</dbReference>
<dbReference type="SMR" id="A6VCK5"/>
<dbReference type="KEGG" id="pap:PSPA7_5468"/>
<dbReference type="HOGENOM" id="CLU_024251_2_1_6"/>
<dbReference type="UniPathway" id="UPA00109">
    <property type="reaction ID" value="UER00189"/>
</dbReference>
<dbReference type="UniPathway" id="UPA00138"/>
<dbReference type="Proteomes" id="UP000001582">
    <property type="component" value="Chromosome"/>
</dbReference>
<dbReference type="GO" id="GO:0005829">
    <property type="term" value="C:cytosol"/>
    <property type="evidence" value="ECO:0007669"/>
    <property type="project" value="TreeGrafter"/>
</dbReference>
<dbReference type="GO" id="GO:0004807">
    <property type="term" value="F:triose-phosphate isomerase activity"/>
    <property type="evidence" value="ECO:0007669"/>
    <property type="project" value="UniProtKB-UniRule"/>
</dbReference>
<dbReference type="GO" id="GO:0006094">
    <property type="term" value="P:gluconeogenesis"/>
    <property type="evidence" value="ECO:0007669"/>
    <property type="project" value="UniProtKB-UniRule"/>
</dbReference>
<dbReference type="GO" id="GO:0046166">
    <property type="term" value="P:glyceraldehyde-3-phosphate biosynthetic process"/>
    <property type="evidence" value="ECO:0007669"/>
    <property type="project" value="TreeGrafter"/>
</dbReference>
<dbReference type="GO" id="GO:0019563">
    <property type="term" value="P:glycerol catabolic process"/>
    <property type="evidence" value="ECO:0007669"/>
    <property type="project" value="TreeGrafter"/>
</dbReference>
<dbReference type="GO" id="GO:0006096">
    <property type="term" value="P:glycolytic process"/>
    <property type="evidence" value="ECO:0007669"/>
    <property type="project" value="UniProtKB-UniRule"/>
</dbReference>
<dbReference type="CDD" id="cd00311">
    <property type="entry name" value="TIM"/>
    <property type="match status" value="1"/>
</dbReference>
<dbReference type="FunFam" id="3.20.20.70:FF:000016">
    <property type="entry name" value="Triosephosphate isomerase"/>
    <property type="match status" value="1"/>
</dbReference>
<dbReference type="Gene3D" id="3.20.20.70">
    <property type="entry name" value="Aldolase class I"/>
    <property type="match status" value="1"/>
</dbReference>
<dbReference type="HAMAP" id="MF_00147_B">
    <property type="entry name" value="TIM_B"/>
    <property type="match status" value="1"/>
</dbReference>
<dbReference type="InterPro" id="IPR013785">
    <property type="entry name" value="Aldolase_TIM"/>
</dbReference>
<dbReference type="InterPro" id="IPR035990">
    <property type="entry name" value="TIM_sf"/>
</dbReference>
<dbReference type="InterPro" id="IPR022896">
    <property type="entry name" value="TrioseP_Isoase_bac/euk"/>
</dbReference>
<dbReference type="InterPro" id="IPR000652">
    <property type="entry name" value="Triosephosphate_isomerase"/>
</dbReference>
<dbReference type="InterPro" id="IPR020861">
    <property type="entry name" value="Triosephosphate_isomerase_AS"/>
</dbReference>
<dbReference type="NCBIfam" id="TIGR00419">
    <property type="entry name" value="tim"/>
    <property type="match status" value="1"/>
</dbReference>
<dbReference type="PANTHER" id="PTHR21139">
    <property type="entry name" value="TRIOSEPHOSPHATE ISOMERASE"/>
    <property type="match status" value="1"/>
</dbReference>
<dbReference type="PANTHER" id="PTHR21139:SF42">
    <property type="entry name" value="TRIOSEPHOSPHATE ISOMERASE"/>
    <property type="match status" value="1"/>
</dbReference>
<dbReference type="Pfam" id="PF00121">
    <property type="entry name" value="TIM"/>
    <property type="match status" value="1"/>
</dbReference>
<dbReference type="SUPFAM" id="SSF51351">
    <property type="entry name" value="Triosephosphate isomerase (TIM)"/>
    <property type="match status" value="1"/>
</dbReference>
<dbReference type="PROSITE" id="PS00171">
    <property type="entry name" value="TIM_1"/>
    <property type="match status" value="1"/>
</dbReference>
<dbReference type="PROSITE" id="PS51440">
    <property type="entry name" value="TIM_2"/>
    <property type="match status" value="1"/>
</dbReference>
<reference key="1">
    <citation type="submission" date="2007-06" db="EMBL/GenBank/DDBJ databases">
        <authorList>
            <person name="Dodson R.J."/>
            <person name="Harkins D."/>
            <person name="Paulsen I.T."/>
        </authorList>
    </citation>
    <scope>NUCLEOTIDE SEQUENCE [LARGE SCALE GENOMIC DNA]</scope>
    <source>
        <strain>DSM 24068 / PA7</strain>
    </source>
</reference>
<protein>
    <recommendedName>
        <fullName evidence="1">Triosephosphate isomerase</fullName>
        <shortName evidence="1">TIM</shortName>
        <shortName evidence="1">TPI</shortName>
        <ecNumber evidence="1">5.3.1.1</ecNumber>
    </recommendedName>
    <alternativeName>
        <fullName evidence="1">Triose-phosphate isomerase</fullName>
    </alternativeName>
</protein>
<keyword id="KW-0963">Cytoplasm</keyword>
<keyword id="KW-0312">Gluconeogenesis</keyword>
<keyword id="KW-0324">Glycolysis</keyword>
<keyword id="KW-0413">Isomerase</keyword>
<proteinExistence type="inferred from homology"/>
<accession>A6VCK5</accession>
<comment type="function">
    <text evidence="1">Involved in the gluconeogenesis. Catalyzes stereospecifically the conversion of dihydroxyacetone phosphate (DHAP) to D-glyceraldehyde-3-phosphate (G3P).</text>
</comment>
<comment type="catalytic activity">
    <reaction evidence="1">
        <text>D-glyceraldehyde 3-phosphate = dihydroxyacetone phosphate</text>
        <dbReference type="Rhea" id="RHEA:18585"/>
        <dbReference type="ChEBI" id="CHEBI:57642"/>
        <dbReference type="ChEBI" id="CHEBI:59776"/>
        <dbReference type="EC" id="5.3.1.1"/>
    </reaction>
</comment>
<comment type="pathway">
    <text evidence="1">Carbohydrate biosynthesis; gluconeogenesis.</text>
</comment>
<comment type="pathway">
    <text evidence="1">Carbohydrate degradation; glycolysis; D-glyceraldehyde 3-phosphate from glycerone phosphate: step 1/1.</text>
</comment>
<comment type="subunit">
    <text evidence="1">Homodimer.</text>
</comment>
<comment type="subcellular location">
    <subcellularLocation>
        <location evidence="1">Cytoplasm</location>
    </subcellularLocation>
</comment>
<comment type="similarity">
    <text evidence="1">Belongs to the triosephosphate isomerase family.</text>
</comment>
<feature type="chain" id="PRO_1000009851" description="Triosephosphate isomerase">
    <location>
        <begin position="1"/>
        <end position="251"/>
    </location>
</feature>
<feature type="active site" description="Electrophile" evidence="1">
    <location>
        <position position="95"/>
    </location>
</feature>
<feature type="active site" description="Proton acceptor" evidence="1">
    <location>
        <position position="167"/>
    </location>
</feature>
<feature type="binding site" evidence="1">
    <location>
        <begin position="9"/>
        <end position="11"/>
    </location>
    <ligand>
        <name>substrate</name>
    </ligand>
</feature>
<feature type="binding site" evidence="1">
    <location>
        <position position="173"/>
    </location>
    <ligand>
        <name>substrate</name>
    </ligand>
</feature>
<feature type="binding site" evidence="1">
    <location>
        <position position="212"/>
    </location>
    <ligand>
        <name>substrate</name>
    </ligand>
</feature>
<feature type="binding site" evidence="1">
    <location>
        <begin position="233"/>
        <end position="234"/>
    </location>
    <ligand>
        <name>substrate</name>
    </ligand>
</feature>
<name>TPIS_PSEP7</name>
<sequence length="251" mass="25489">MRRPLVAGNWKMHGTHSSVADLIKGLRQLALPSGVDVAVMPPCLFISQVVQGLAGKAIGVGAQNSAVEPMQGALTGEIAPSQLADAGCGMVLVGHSERRLILGESDEVVSRKFAAAQSCGLVPVLCVGETRAEREAGKTLEVVARQLGSVIDELGVGAFARAVVAYEPVWAIGTGLTASPAQAQEVHAAIRAQLAAENAEVAKGVRLLYGGSVKAASAAELFGMPDIDGGLVGGASLNADEFGAICRAAGS</sequence>